<comment type="function">
    <text evidence="1">Component of the Mediator complex, a coactivator involved in the regulated transcription of nearly all RNA polymerase II-dependent genes. Mediator functions as a bridge to convey information from gene-specific regulatory proteins to the basal RNA polymerase II transcription machinery. Mediator is recruited to promoters by direct interactions with regulatory proteins and serves as a scaffold for the assembly of a functional preinitiation complex with RNA polymerase II and the general transcription factors (By similarity).</text>
</comment>
<comment type="subunit">
    <text evidence="1">Component of the Mediator complex.</text>
</comment>
<comment type="subcellular location">
    <subcellularLocation>
        <location evidence="2">Nucleus</location>
    </subcellularLocation>
</comment>
<comment type="similarity">
    <text evidence="2">Belongs to the Mediator complex subunit 20 family.</text>
</comment>
<name>MED20_ANOGA</name>
<dbReference type="EMBL" id="AAAB01008960">
    <property type="protein sequence ID" value="EAA11828.4"/>
    <property type="molecule type" value="Genomic_DNA"/>
</dbReference>
<dbReference type="SMR" id="Q7Q6Y4"/>
<dbReference type="FunCoup" id="Q7Q6Y4">
    <property type="interactions" value="2611"/>
</dbReference>
<dbReference type="STRING" id="7165.Q7Q6Y4"/>
<dbReference type="PaxDb" id="7165-AGAP005604-PA"/>
<dbReference type="EnsemblMetazoa" id="AGAP005604-RA">
    <property type="protein sequence ID" value="AGAP005604-PA"/>
    <property type="gene ID" value="AGAP005604"/>
</dbReference>
<dbReference type="GeneID" id="1276291"/>
<dbReference type="KEGG" id="aga:1276291"/>
<dbReference type="CTD" id="9477"/>
<dbReference type="VEuPathDB" id="VectorBase:AGAMI1_002466"/>
<dbReference type="VEuPathDB" id="VectorBase:AGAP005604"/>
<dbReference type="eggNOG" id="KOG4309">
    <property type="taxonomic scope" value="Eukaryota"/>
</dbReference>
<dbReference type="HOGENOM" id="CLU_080044_1_0_1"/>
<dbReference type="InParanoid" id="Q7Q6Y4"/>
<dbReference type="OMA" id="NDIYEPM"/>
<dbReference type="PhylomeDB" id="Q7Q6Y4"/>
<dbReference type="Proteomes" id="UP000007062">
    <property type="component" value="Chromosome 2L"/>
</dbReference>
<dbReference type="GO" id="GO:0016592">
    <property type="term" value="C:mediator complex"/>
    <property type="evidence" value="ECO:0000318"/>
    <property type="project" value="GO_Central"/>
</dbReference>
<dbReference type="GO" id="GO:0003713">
    <property type="term" value="F:transcription coactivator activity"/>
    <property type="evidence" value="ECO:0000318"/>
    <property type="project" value="GO_Central"/>
</dbReference>
<dbReference type="GO" id="GO:0006357">
    <property type="term" value="P:regulation of transcription by RNA polymerase II"/>
    <property type="evidence" value="ECO:0000318"/>
    <property type="project" value="GO_Central"/>
</dbReference>
<dbReference type="InterPro" id="IPR013921">
    <property type="entry name" value="Mediator_Med20"/>
</dbReference>
<dbReference type="PANTHER" id="PTHR12465:SF0">
    <property type="entry name" value="MEDIATOR OF RNA POLYMERASE II TRANSCRIPTION SUBUNIT 20"/>
    <property type="match status" value="1"/>
</dbReference>
<dbReference type="PANTHER" id="PTHR12465">
    <property type="entry name" value="UBIQUITIN SPECIFIC PROTEASE HOMOLOG 49"/>
    <property type="match status" value="1"/>
</dbReference>
<dbReference type="Pfam" id="PF08612">
    <property type="entry name" value="Med20"/>
    <property type="match status" value="1"/>
</dbReference>
<reference key="1">
    <citation type="journal article" date="2002" name="Science">
        <title>The genome sequence of the malaria mosquito Anopheles gambiae.</title>
        <authorList>
            <person name="Holt R.A."/>
            <person name="Subramanian G.M."/>
            <person name="Halpern A."/>
            <person name="Sutton G.G."/>
            <person name="Charlab R."/>
            <person name="Nusskern D.R."/>
            <person name="Wincker P."/>
            <person name="Clark A.G."/>
            <person name="Ribeiro J.M.C."/>
            <person name="Wides R."/>
            <person name="Salzberg S.L."/>
            <person name="Loftus B.J."/>
            <person name="Yandell M.D."/>
            <person name="Majoros W.H."/>
            <person name="Rusch D.B."/>
            <person name="Lai Z."/>
            <person name="Kraft C.L."/>
            <person name="Abril J.F."/>
            <person name="Anthouard V."/>
            <person name="Arensburger P."/>
            <person name="Atkinson P.W."/>
            <person name="Baden H."/>
            <person name="de Berardinis V."/>
            <person name="Baldwin D."/>
            <person name="Benes V."/>
            <person name="Biedler J."/>
            <person name="Blass C."/>
            <person name="Bolanos R."/>
            <person name="Boscus D."/>
            <person name="Barnstead M."/>
            <person name="Cai S."/>
            <person name="Center A."/>
            <person name="Chaturverdi K."/>
            <person name="Christophides G.K."/>
            <person name="Chrystal M.A.M."/>
            <person name="Clamp M."/>
            <person name="Cravchik A."/>
            <person name="Curwen V."/>
            <person name="Dana A."/>
            <person name="Delcher A."/>
            <person name="Dew I."/>
            <person name="Evans C.A."/>
            <person name="Flanigan M."/>
            <person name="Grundschober-Freimoser A."/>
            <person name="Friedli L."/>
            <person name="Gu Z."/>
            <person name="Guan P."/>
            <person name="Guigo R."/>
            <person name="Hillenmeyer M.E."/>
            <person name="Hladun S.L."/>
            <person name="Hogan J.R."/>
            <person name="Hong Y.S."/>
            <person name="Hoover J."/>
            <person name="Jaillon O."/>
            <person name="Ke Z."/>
            <person name="Kodira C.D."/>
            <person name="Kokoza E."/>
            <person name="Koutsos A."/>
            <person name="Letunic I."/>
            <person name="Levitsky A.A."/>
            <person name="Liang Y."/>
            <person name="Lin J.-J."/>
            <person name="Lobo N.F."/>
            <person name="Lopez J.R."/>
            <person name="Malek J.A."/>
            <person name="McIntosh T.C."/>
            <person name="Meister S."/>
            <person name="Miller J.R."/>
            <person name="Mobarry C."/>
            <person name="Mongin E."/>
            <person name="Murphy S.D."/>
            <person name="O'Brochta D.A."/>
            <person name="Pfannkoch C."/>
            <person name="Qi R."/>
            <person name="Regier M.A."/>
            <person name="Remington K."/>
            <person name="Shao H."/>
            <person name="Sharakhova M.V."/>
            <person name="Sitter C.D."/>
            <person name="Shetty J."/>
            <person name="Smith T.J."/>
            <person name="Strong R."/>
            <person name="Sun J."/>
            <person name="Thomasova D."/>
            <person name="Ton L.Q."/>
            <person name="Topalis P."/>
            <person name="Tu Z.J."/>
            <person name="Unger M.F."/>
            <person name="Walenz B."/>
            <person name="Wang A.H."/>
            <person name="Wang J."/>
            <person name="Wang M."/>
            <person name="Wang X."/>
            <person name="Woodford K.J."/>
            <person name="Wortman J.R."/>
            <person name="Wu M."/>
            <person name="Yao A."/>
            <person name="Zdobnov E.M."/>
            <person name="Zhang H."/>
            <person name="Zhao Q."/>
            <person name="Zhao S."/>
            <person name="Zhu S.C."/>
            <person name="Zhimulev I."/>
            <person name="Coluzzi M."/>
            <person name="della Torre A."/>
            <person name="Roth C.W."/>
            <person name="Louis C."/>
            <person name="Kalush F."/>
            <person name="Mural R.J."/>
            <person name="Myers E.W."/>
            <person name="Adams M.D."/>
            <person name="Smith H.O."/>
            <person name="Broder S."/>
            <person name="Gardner M.J."/>
            <person name="Fraser C.M."/>
            <person name="Birney E."/>
            <person name="Bork P."/>
            <person name="Brey P.T."/>
            <person name="Venter J.C."/>
            <person name="Weissenbach J."/>
            <person name="Kafatos F.C."/>
            <person name="Collins F.H."/>
            <person name="Hoffman S.L."/>
        </authorList>
    </citation>
    <scope>NUCLEOTIDE SEQUENCE [LARGE SCALE GENOMIC DNA]</scope>
    <source>
        <strain>PEST</strain>
    </source>
</reference>
<accession>Q7Q6Y4</accession>
<organism>
    <name type="scientific">Anopheles gambiae</name>
    <name type="common">African malaria mosquito</name>
    <dbReference type="NCBI Taxonomy" id="7165"/>
    <lineage>
        <taxon>Eukaryota</taxon>
        <taxon>Metazoa</taxon>
        <taxon>Ecdysozoa</taxon>
        <taxon>Arthropoda</taxon>
        <taxon>Hexapoda</taxon>
        <taxon>Insecta</taxon>
        <taxon>Pterygota</taxon>
        <taxon>Neoptera</taxon>
        <taxon>Endopterygota</taxon>
        <taxon>Diptera</taxon>
        <taxon>Nematocera</taxon>
        <taxon>Culicoidea</taxon>
        <taxon>Culicidae</taxon>
        <taxon>Anophelinae</taxon>
        <taxon>Anopheles</taxon>
    </lineage>
</organism>
<feature type="chain" id="PRO_0000308562" description="Mediator of RNA polymerase II transcription subunit 20">
    <location>
        <begin position="1"/>
        <end position="218"/>
    </location>
</feature>
<gene>
    <name type="primary">MED20</name>
    <name type="ORF">AGAP005604</name>
</gene>
<evidence type="ECO:0000250" key="1"/>
<evidence type="ECO:0000305" key="2"/>
<sequence>MGVTVLQPYPLEKSGAQTIDFLLKRVVALGAVPAGQFLVDCETYSSNPQLGPPKTVHILHNSEQPASVFSILDTGTKQIPLVTDGLFDLLMTRIAPAYTSKKQTKIESKGQRFEFGDFVIKLGSVTMSQNFKGVLVEVEYRPCLVPGSCWELMREFLQGFLGSNVSNSMPAYFTQRSSINPNHSKANEIYQPIDTINQYLEHFTNYRKQTMAPVGVRP</sequence>
<protein>
    <recommendedName>
        <fullName>Mediator of RNA polymerase II transcription subunit 20</fullName>
    </recommendedName>
    <alternativeName>
        <fullName>Mediator complex subunit 20</fullName>
    </alternativeName>
</protein>
<proteinExistence type="inferred from homology"/>
<keyword id="KW-0010">Activator</keyword>
<keyword id="KW-0539">Nucleus</keyword>
<keyword id="KW-1185">Reference proteome</keyword>
<keyword id="KW-0804">Transcription</keyword>
<keyword id="KW-0805">Transcription regulation</keyword>